<feature type="chain" id="PRO_0000399063" description="Increased recombination centers protein 19">
    <location>
        <begin position="1"/>
        <end position="230"/>
    </location>
</feature>
<protein>
    <recommendedName>
        <fullName>Increased recombination centers protein 19</fullName>
    </recommendedName>
</protein>
<keyword id="KW-0749">Sporulation</keyword>
<gene>
    <name type="primary">IRC19</name>
    <name type="synonym">RRG4</name>
    <name type="ORF">SCRG_04957</name>
</gene>
<accession>B3LTD9</accession>
<organism>
    <name type="scientific">Saccharomyces cerevisiae (strain RM11-1a)</name>
    <name type="common">Baker's yeast</name>
    <dbReference type="NCBI Taxonomy" id="285006"/>
    <lineage>
        <taxon>Eukaryota</taxon>
        <taxon>Fungi</taxon>
        <taxon>Dikarya</taxon>
        <taxon>Ascomycota</taxon>
        <taxon>Saccharomycotina</taxon>
        <taxon>Saccharomycetes</taxon>
        <taxon>Saccharomycetales</taxon>
        <taxon>Saccharomycetaceae</taxon>
        <taxon>Saccharomyces</taxon>
    </lineage>
</organism>
<name>IRC19_YEAS1</name>
<comment type="function">
    <text evidence="1">Involved in sporulation and maintenance of the mitochondrial DNA. Is probably involved in a pathway contributing to genomic integrity (By similarity).</text>
</comment>
<comment type="similarity">
    <text evidence="2">Belongs to the IRC19 family.</text>
</comment>
<sequence>MRKPSITITTAKAIITPDYTLIKSHSKYQLPSRFQKLDADSPERSTVVKLFYRRFMRLKPFISNVKMVKDTYRDYVRYKFMKENYELKRYLVFNPDGLRSKIKLELLSNTKCCERILPVTEMQRTLEFVLKSCSYLPETKAQKWDIARDNTYCRQILKNLLTMQYEKYRSILHRGIGHDELDVKFSHLKTTSSPLTKLNKTEKKKIPLFKVFSDFDTTLIYLNETLGTRL</sequence>
<evidence type="ECO:0000250" key="1"/>
<evidence type="ECO:0000305" key="2"/>
<proteinExistence type="inferred from homology"/>
<dbReference type="EMBL" id="CH408054">
    <property type="protein sequence ID" value="EDV09282.1"/>
    <property type="molecule type" value="Genomic_DNA"/>
</dbReference>
<dbReference type="HOGENOM" id="CLU_106818_0_0_1"/>
<dbReference type="OrthoDB" id="6849at4893"/>
<dbReference type="Proteomes" id="UP000008335">
    <property type="component" value="Unassembled WGS sequence"/>
</dbReference>
<dbReference type="GO" id="GO:0030437">
    <property type="term" value="P:ascospore formation"/>
    <property type="evidence" value="ECO:0007669"/>
    <property type="project" value="InterPro"/>
</dbReference>
<dbReference type="InterPro" id="IPR016613">
    <property type="entry name" value="Irc19"/>
</dbReference>
<dbReference type="PIRSF" id="PIRSF013329">
    <property type="entry name" value="UCP013329"/>
    <property type="match status" value="1"/>
</dbReference>
<reference key="1">
    <citation type="submission" date="2005-03" db="EMBL/GenBank/DDBJ databases">
        <title>Annotation of the Saccharomyces cerevisiae RM11-1a genome.</title>
        <authorList>
            <consortium name="The Broad Institute Genome Sequencing Platform"/>
            <person name="Birren B.W."/>
            <person name="Lander E.S."/>
            <person name="Galagan J.E."/>
            <person name="Nusbaum C."/>
            <person name="Devon K."/>
            <person name="Cuomo C."/>
            <person name="Jaffe D.B."/>
            <person name="Butler J."/>
            <person name="Alvarez P."/>
            <person name="Gnerre S."/>
            <person name="Grabherr M."/>
            <person name="Kleber M."/>
            <person name="Mauceli E.W."/>
            <person name="Brockman W."/>
            <person name="MacCallum I.A."/>
            <person name="Rounsley S."/>
            <person name="Young S.K."/>
            <person name="LaButti K."/>
            <person name="Pushparaj V."/>
            <person name="DeCaprio D."/>
            <person name="Crawford M."/>
            <person name="Koehrsen M."/>
            <person name="Engels R."/>
            <person name="Montgomery P."/>
            <person name="Pearson M."/>
            <person name="Howarth C."/>
            <person name="Larson L."/>
            <person name="Luoma S."/>
            <person name="White J."/>
            <person name="O'Leary S."/>
            <person name="Kodira C.D."/>
            <person name="Zeng Q."/>
            <person name="Yandava C."/>
            <person name="Alvarado L."/>
            <person name="Pratt S."/>
            <person name="Kruglyak L."/>
        </authorList>
    </citation>
    <scope>NUCLEOTIDE SEQUENCE [LARGE SCALE GENOMIC DNA]</scope>
    <source>
        <strain>RM11-1a</strain>
    </source>
</reference>